<keyword id="KW-0007">Acetylation</keyword>
<keyword id="KW-0488">Methylation</keyword>
<keyword id="KW-0548">Nucleotidyltransferase</keyword>
<keyword id="KW-0539">Nucleus</keyword>
<keyword id="KW-1185">Reference proteome</keyword>
<keyword id="KW-0808">Transferase</keyword>
<accession>P69060</accession>
<protein>
    <recommendedName>
        <fullName>N-acylneuraminate cytidylyltransferase</fullName>
        <ecNumber>2.7.7.43</ecNumber>
    </recommendedName>
    <alternativeName>
        <fullName>CMP-N-acetylneuraminic acid synthase</fullName>
        <shortName>CMP-NeuNAc synthase</shortName>
    </alternativeName>
</protein>
<proteinExistence type="evidence at transcript level"/>
<evidence type="ECO:0000250" key="1"/>
<evidence type="ECO:0000250" key="2">
    <source>
        <dbReference type="UniProtKB" id="Q8NFW8"/>
    </source>
</evidence>
<evidence type="ECO:0000250" key="3">
    <source>
        <dbReference type="UniProtKB" id="Q99KK2"/>
    </source>
</evidence>
<evidence type="ECO:0000256" key="4">
    <source>
        <dbReference type="SAM" id="MobiDB-lite"/>
    </source>
</evidence>
<evidence type="ECO:0000305" key="5"/>
<sequence>MDALEKGAATSGPAPRGRPSRGRPPKLQRSRGAGRGLEKPPHLAALVLARGGSKGIPLKNIKRLAGVPLIGWVLRAALDAGVFQSVWVSTDHDEIENVAKQFGAQVHRRSSETSKDSSTSLDAIVEFLNYHNEVDIVGNIQATSPCLHPTDLQKVAEMIREEGYDSVFSVVRRHQFRWSEIQKGVREVTEPLNLNPAKRPRRQDWDGELYENGSFYFAKRHLIEMGYLQGGKMAYYEMRAEHSVDIDVDIDWPIAEQRVLRFGYFGKEKLKEIKLLVCNIDGCLTNGHIYVSGDQKEIISYDVKDAIGISLLKKSGIEVRLISERACSKQTLSALKLDCKTEVSVSDKLATVDEWRKEMGLCWKEVAYLGNEVSDEECLKRVGLSAVPADACSRAQKAVGYICKCSGGRGAIREFAEHIFLLLEKVNNSCQK</sequence>
<comment type="function">
    <text evidence="1">Catalyzes the activation of N-acetylneuraminic acid (NeuNAc) to cytidine 5'-monophosphate N-acetylneuraminic acid (CMP-NeuNAc), a substrate required for the addition of sialic acid. Has some activity toward NeuNAc, N-glycolylneuraminic acid (Neu5Gc) or 2-keto-3-deoxy-D-glycero-D-galacto-nononic acid (KDN) (By similarity).</text>
</comment>
<comment type="catalytic activity">
    <reaction>
        <text>an N-acylneuraminate + CTP = a CMP-N-acyl-beta-neuraminate + diphosphate</text>
        <dbReference type="Rhea" id="RHEA:11344"/>
        <dbReference type="ChEBI" id="CHEBI:33019"/>
        <dbReference type="ChEBI" id="CHEBI:37563"/>
        <dbReference type="ChEBI" id="CHEBI:60073"/>
        <dbReference type="ChEBI" id="CHEBI:68671"/>
        <dbReference type="EC" id="2.7.7.43"/>
    </reaction>
</comment>
<comment type="pathway">
    <text>Amino-sugar metabolism; N-acetylneuraminate metabolism.</text>
</comment>
<comment type="subunit">
    <text evidence="1">Homotetramer; the active enzyme is formed by a dimer of dimers.</text>
</comment>
<comment type="subcellular location">
    <subcellularLocation>
        <location evidence="1">Nucleus</location>
    </subcellularLocation>
</comment>
<comment type="tissue specificity">
    <text>Liver.</text>
</comment>
<comment type="domain">
    <text evidence="1">The BC2 (basic cluster 2) motif is necessary and sufficient for the nuclear localization and contains the catalytic active site. The localization in the nucleus is however not required for the enzyme activity (By similarity).</text>
</comment>
<comment type="similarity">
    <text evidence="5">Belongs to the CMP-NeuNAc synthase family.</text>
</comment>
<feature type="chain" id="PRO_0000213201" description="N-acylneuraminate cytidylyltransferase">
    <location>
        <begin position="1"/>
        <end position="432"/>
    </location>
</feature>
<feature type="region of interest" description="Disordered" evidence="4">
    <location>
        <begin position="1"/>
        <end position="38"/>
    </location>
</feature>
<feature type="short sequence motif" description="BC1 motif">
    <location>
        <begin position="15"/>
        <end position="31"/>
    </location>
</feature>
<feature type="short sequence motif" description="BC2 motif">
    <location>
        <begin position="198"/>
        <end position="204"/>
    </location>
</feature>
<feature type="short sequence motif" description="BC3 motif">
    <location>
        <begin position="267"/>
        <end position="274"/>
    </location>
</feature>
<feature type="compositionally biased region" description="Basic residues" evidence="4">
    <location>
        <begin position="18"/>
        <end position="29"/>
    </location>
</feature>
<feature type="active site" evidence="1">
    <location>
        <position position="199"/>
    </location>
</feature>
<feature type="binding site" evidence="1">
    <location>
        <position position="50"/>
    </location>
    <ligand>
        <name>substrate</name>
    </ligand>
</feature>
<feature type="binding site" evidence="1">
    <location>
        <position position="60"/>
    </location>
    <ligand>
        <name>substrate</name>
    </ligand>
</feature>
<feature type="binding site" evidence="1">
    <location>
        <position position="109"/>
    </location>
    <ligand>
        <name>substrate</name>
    </ligand>
</feature>
<feature type="binding site" evidence="1">
    <location>
        <position position="118"/>
    </location>
    <ligand>
        <name>substrate</name>
    </ligand>
</feature>
<feature type="binding site" evidence="1">
    <location>
        <position position="120"/>
    </location>
    <ligand>
        <name>substrate</name>
    </ligand>
</feature>
<feature type="binding site" evidence="1">
    <location>
        <position position="141"/>
    </location>
    <ligand>
        <name>substrate</name>
    </ligand>
</feature>
<feature type="modified residue" description="N-acetylmethionine" evidence="2">
    <location>
        <position position="1"/>
    </location>
</feature>
<feature type="modified residue" description="Omega-N-methylarginine" evidence="3">
    <location>
        <position position="35"/>
    </location>
</feature>
<feature type="modified residue" description="Omega-N-methylarginine" evidence="3">
    <location>
        <position position="50"/>
    </location>
</feature>
<dbReference type="EC" id="2.7.7.43"/>
<dbReference type="EMBL" id="AABR03032443">
    <property type="status" value="NOT_ANNOTATED_CDS"/>
    <property type="molecule type" value="Genomic_DNA"/>
</dbReference>
<dbReference type="SMR" id="P69060"/>
<dbReference type="FunCoup" id="P69060">
    <property type="interactions" value="164"/>
</dbReference>
<dbReference type="STRING" id="10116.ENSRNOP00000018734"/>
<dbReference type="iPTMnet" id="P69060"/>
<dbReference type="PhosphoSitePlus" id="P69060"/>
<dbReference type="PaxDb" id="10116-ENSRNOP00000018734"/>
<dbReference type="UCSC" id="RGD:1310911">
    <property type="organism name" value="rat"/>
</dbReference>
<dbReference type="AGR" id="RGD:1310911"/>
<dbReference type="RGD" id="1310911">
    <property type="gene designation" value="Cmas"/>
</dbReference>
<dbReference type="eggNOG" id="ENOG502QQH3">
    <property type="taxonomic scope" value="Eukaryota"/>
</dbReference>
<dbReference type="InParanoid" id="P69060"/>
<dbReference type="PhylomeDB" id="P69060"/>
<dbReference type="BioCyc" id="MetaCyc:MONOMER-14520"/>
<dbReference type="Reactome" id="R-RNO-4085001">
    <property type="pathway name" value="Sialic acid metabolism"/>
</dbReference>
<dbReference type="SABIO-RK" id="P69060"/>
<dbReference type="UniPathway" id="UPA00628"/>
<dbReference type="PRO" id="PR:P69060"/>
<dbReference type="Proteomes" id="UP000002494">
    <property type="component" value="Unplaced"/>
</dbReference>
<dbReference type="GO" id="GO:0005654">
    <property type="term" value="C:nucleoplasm"/>
    <property type="evidence" value="ECO:0000266"/>
    <property type="project" value="RGD"/>
</dbReference>
<dbReference type="GO" id="GO:0008781">
    <property type="term" value="F:N-acylneuraminate cytidylyltransferase activity"/>
    <property type="evidence" value="ECO:0000266"/>
    <property type="project" value="RGD"/>
</dbReference>
<dbReference type="GO" id="GO:0006055">
    <property type="term" value="P:CMP-N-acetylneuraminate biosynthetic process"/>
    <property type="evidence" value="ECO:0000266"/>
    <property type="project" value="RGD"/>
</dbReference>
<dbReference type="GO" id="GO:0070085">
    <property type="term" value="P:glycosylation"/>
    <property type="evidence" value="ECO:0000266"/>
    <property type="project" value="RGD"/>
</dbReference>
<dbReference type="GO" id="GO:0006054">
    <property type="term" value="P:N-acetylneuraminate metabolic process"/>
    <property type="evidence" value="ECO:0000266"/>
    <property type="project" value="RGD"/>
</dbReference>
<dbReference type="CDD" id="cd02513">
    <property type="entry name" value="CMP-NeuAc_Synthase"/>
    <property type="match status" value="1"/>
</dbReference>
<dbReference type="CDD" id="cd01630">
    <property type="entry name" value="HAD_KDO-like"/>
    <property type="match status" value="1"/>
</dbReference>
<dbReference type="FunFam" id="3.40.50.1000:FF:000082">
    <property type="entry name" value="N-acylneuraminate cytidylyltransferase A"/>
    <property type="match status" value="1"/>
</dbReference>
<dbReference type="FunFam" id="3.90.550.10:FF:000074">
    <property type="entry name" value="N-acylneuraminate cytidylyltransferase A"/>
    <property type="match status" value="1"/>
</dbReference>
<dbReference type="Gene3D" id="3.40.50.1000">
    <property type="entry name" value="HAD superfamily/HAD-like"/>
    <property type="match status" value="1"/>
</dbReference>
<dbReference type="Gene3D" id="3.90.550.10">
    <property type="entry name" value="Spore Coat Polysaccharide Biosynthesis Protein SpsA, Chain A"/>
    <property type="match status" value="1"/>
</dbReference>
<dbReference type="InterPro" id="IPR050793">
    <property type="entry name" value="CMP-NeuNAc_synthase"/>
</dbReference>
<dbReference type="InterPro" id="IPR003329">
    <property type="entry name" value="Cytidylyl_trans"/>
</dbReference>
<dbReference type="InterPro" id="IPR036412">
    <property type="entry name" value="HAD-like_sf"/>
</dbReference>
<dbReference type="InterPro" id="IPR023214">
    <property type="entry name" value="HAD_sf"/>
</dbReference>
<dbReference type="InterPro" id="IPR029044">
    <property type="entry name" value="Nucleotide-diphossugar_trans"/>
</dbReference>
<dbReference type="PANTHER" id="PTHR21485">
    <property type="entry name" value="HAD SUPERFAMILY MEMBERS CMAS AND KDSC"/>
    <property type="match status" value="1"/>
</dbReference>
<dbReference type="PANTHER" id="PTHR21485:SF3">
    <property type="entry name" value="N-ACYLNEURAMINATE CYTIDYLYLTRANSFERASE"/>
    <property type="match status" value="1"/>
</dbReference>
<dbReference type="Pfam" id="PF02348">
    <property type="entry name" value="CTP_transf_3"/>
    <property type="match status" value="1"/>
</dbReference>
<dbReference type="SUPFAM" id="SSF56784">
    <property type="entry name" value="HAD-like"/>
    <property type="match status" value="1"/>
</dbReference>
<dbReference type="SUPFAM" id="SSF53448">
    <property type="entry name" value="Nucleotide-diphospho-sugar transferases"/>
    <property type="match status" value="1"/>
</dbReference>
<organism>
    <name type="scientific">Rattus norvegicus</name>
    <name type="common">Rat</name>
    <dbReference type="NCBI Taxonomy" id="10116"/>
    <lineage>
        <taxon>Eukaryota</taxon>
        <taxon>Metazoa</taxon>
        <taxon>Chordata</taxon>
        <taxon>Craniata</taxon>
        <taxon>Vertebrata</taxon>
        <taxon>Euteleostomi</taxon>
        <taxon>Mammalia</taxon>
        <taxon>Eutheria</taxon>
        <taxon>Euarchontoglires</taxon>
        <taxon>Glires</taxon>
        <taxon>Rodentia</taxon>
        <taxon>Myomorpha</taxon>
        <taxon>Muroidea</taxon>
        <taxon>Muridae</taxon>
        <taxon>Murinae</taxon>
        <taxon>Rattus</taxon>
    </lineage>
</organism>
<name>NEUA_RAT</name>
<reference key="1">
    <citation type="journal article" date="2004" name="Nature">
        <title>Genome sequence of the Brown Norway rat yields insights into mammalian evolution.</title>
        <authorList>
            <person name="Gibbs R.A."/>
            <person name="Weinstock G.M."/>
            <person name="Metzker M.L."/>
            <person name="Muzny D.M."/>
            <person name="Sodergren E.J."/>
            <person name="Scherer S."/>
            <person name="Scott G."/>
            <person name="Steffen D."/>
            <person name="Worley K.C."/>
            <person name="Burch P.E."/>
            <person name="Okwuonu G."/>
            <person name="Hines S."/>
            <person name="Lewis L."/>
            <person name="Deramo C."/>
            <person name="Delgado O."/>
            <person name="Dugan-Rocha S."/>
            <person name="Miner G."/>
            <person name="Morgan M."/>
            <person name="Hawes A."/>
            <person name="Gill R."/>
            <person name="Holt R.A."/>
            <person name="Adams M.D."/>
            <person name="Amanatides P.G."/>
            <person name="Baden-Tillson H."/>
            <person name="Barnstead M."/>
            <person name="Chin S."/>
            <person name="Evans C.A."/>
            <person name="Ferriera S."/>
            <person name="Fosler C."/>
            <person name="Glodek A."/>
            <person name="Gu Z."/>
            <person name="Jennings D."/>
            <person name="Kraft C.L."/>
            <person name="Nguyen T."/>
            <person name="Pfannkoch C.M."/>
            <person name="Sitter C."/>
            <person name="Sutton G.G."/>
            <person name="Venter J.C."/>
            <person name="Woodage T."/>
            <person name="Smith D."/>
            <person name="Lee H.-M."/>
            <person name="Gustafson E."/>
            <person name="Cahill P."/>
            <person name="Kana A."/>
            <person name="Doucette-Stamm L."/>
            <person name="Weinstock K."/>
            <person name="Fechtel K."/>
            <person name="Weiss R.B."/>
            <person name="Dunn D.M."/>
            <person name="Green E.D."/>
            <person name="Blakesley R.W."/>
            <person name="Bouffard G.G."/>
            <person name="De Jong P.J."/>
            <person name="Osoegawa K."/>
            <person name="Zhu B."/>
            <person name="Marra M."/>
            <person name="Schein J."/>
            <person name="Bosdet I."/>
            <person name="Fjell C."/>
            <person name="Jones S."/>
            <person name="Krzywinski M."/>
            <person name="Mathewson C."/>
            <person name="Siddiqui A."/>
            <person name="Wye N."/>
            <person name="McPherson J."/>
            <person name="Zhao S."/>
            <person name="Fraser C.M."/>
            <person name="Shetty J."/>
            <person name="Shatsman S."/>
            <person name="Geer K."/>
            <person name="Chen Y."/>
            <person name="Abramzon S."/>
            <person name="Nierman W.C."/>
            <person name="Havlak P.H."/>
            <person name="Chen R."/>
            <person name="Durbin K.J."/>
            <person name="Egan A."/>
            <person name="Ren Y."/>
            <person name="Song X.-Z."/>
            <person name="Li B."/>
            <person name="Liu Y."/>
            <person name="Qin X."/>
            <person name="Cawley S."/>
            <person name="Cooney A.J."/>
            <person name="D'Souza L.M."/>
            <person name="Martin K."/>
            <person name="Wu J.Q."/>
            <person name="Gonzalez-Garay M.L."/>
            <person name="Jackson A.R."/>
            <person name="Kalafus K.J."/>
            <person name="McLeod M.P."/>
            <person name="Milosavljevic A."/>
            <person name="Virk D."/>
            <person name="Volkov A."/>
            <person name="Wheeler D.A."/>
            <person name="Zhang Z."/>
            <person name="Bailey J.A."/>
            <person name="Eichler E.E."/>
            <person name="Tuzun E."/>
            <person name="Birney E."/>
            <person name="Mongin E."/>
            <person name="Ureta-Vidal A."/>
            <person name="Woodwark C."/>
            <person name="Zdobnov E."/>
            <person name="Bork P."/>
            <person name="Suyama M."/>
            <person name="Torrents D."/>
            <person name="Alexandersson M."/>
            <person name="Trask B.J."/>
            <person name="Young J.M."/>
            <person name="Huang H."/>
            <person name="Wang H."/>
            <person name="Xing H."/>
            <person name="Daniels S."/>
            <person name="Gietzen D."/>
            <person name="Schmidt J."/>
            <person name="Stevens K."/>
            <person name="Vitt U."/>
            <person name="Wingrove J."/>
            <person name="Camara F."/>
            <person name="Mar Alba M."/>
            <person name="Abril J.F."/>
            <person name="Guigo R."/>
            <person name="Smit A."/>
            <person name="Dubchak I."/>
            <person name="Rubin E.M."/>
            <person name="Couronne O."/>
            <person name="Poliakov A."/>
            <person name="Huebner N."/>
            <person name="Ganten D."/>
            <person name="Goesele C."/>
            <person name="Hummel O."/>
            <person name="Kreitler T."/>
            <person name="Lee Y.-A."/>
            <person name="Monti J."/>
            <person name="Schulz H."/>
            <person name="Zimdahl H."/>
            <person name="Himmelbauer H."/>
            <person name="Lehrach H."/>
            <person name="Jacob H.J."/>
            <person name="Bromberg S."/>
            <person name="Gullings-Handley J."/>
            <person name="Jensen-Seaman M.I."/>
            <person name="Kwitek A.E."/>
            <person name="Lazar J."/>
            <person name="Pasko D."/>
            <person name="Tonellato P.J."/>
            <person name="Twigger S."/>
            <person name="Ponting C.P."/>
            <person name="Duarte J.M."/>
            <person name="Rice S."/>
            <person name="Goodstadt L."/>
            <person name="Beatson S.A."/>
            <person name="Emes R.D."/>
            <person name="Winter E.E."/>
            <person name="Webber C."/>
            <person name="Brandt P."/>
            <person name="Nyakatura G."/>
            <person name="Adetobi M."/>
            <person name="Chiaromonte F."/>
            <person name="Elnitski L."/>
            <person name="Eswara P."/>
            <person name="Hardison R.C."/>
            <person name="Hou M."/>
            <person name="Kolbe D."/>
            <person name="Makova K."/>
            <person name="Miller W."/>
            <person name="Nekrutenko A."/>
            <person name="Riemer C."/>
            <person name="Schwartz S."/>
            <person name="Taylor J."/>
            <person name="Yang S."/>
            <person name="Zhang Y."/>
            <person name="Lindpaintner K."/>
            <person name="Andrews T.D."/>
            <person name="Caccamo M."/>
            <person name="Clamp M."/>
            <person name="Clarke L."/>
            <person name="Curwen V."/>
            <person name="Durbin R.M."/>
            <person name="Eyras E."/>
            <person name="Searle S.M."/>
            <person name="Cooper G.M."/>
            <person name="Batzoglou S."/>
            <person name="Brudno M."/>
            <person name="Sidow A."/>
            <person name="Stone E.A."/>
            <person name="Payseur B.A."/>
            <person name="Bourque G."/>
            <person name="Lopez-Otin C."/>
            <person name="Puente X.S."/>
            <person name="Chakrabarti K."/>
            <person name="Chatterji S."/>
            <person name="Dewey C."/>
            <person name="Pachter L."/>
            <person name="Bray N."/>
            <person name="Yap V.B."/>
            <person name="Caspi A."/>
            <person name="Tesler G."/>
            <person name="Pevzner P.A."/>
            <person name="Haussler D."/>
            <person name="Roskin K.M."/>
            <person name="Baertsch R."/>
            <person name="Clawson H."/>
            <person name="Furey T.S."/>
            <person name="Hinrichs A.S."/>
            <person name="Karolchik D."/>
            <person name="Kent W.J."/>
            <person name="Rosenbloom K.R."/>
            <person name="Trumbower H."/>
            <person name="Weirauch M."/>
            <person name="Cooper D.N."/>
            <person name="Stenson P.D."/>
            <person name="Ma B."/>
            <person name="Brent M."/>
            <person name="Arumugam M."/>
            <person name="Shteynberg D."/>
            <person name="Copley R.R."/>
            <person name="Taylor M.S."/>
            <person name="Riethman H."/>
            <person name="Mudunuri U."/>
            <person name="Peterson J."/>
            <person name="Guyer M."/>
            <person name="Felsenfeld A."/>
            <person name="Old S."/>
            <person name="Mockrin S."/>
            <person name="Collins F.S."/>
        </authorList>
    </citation>
    <scope>NUCLEOTIDE SEQUENCE [LARGE SCALE GENOMIC DNA]</scope>
    <source>
        <strain>Brown Norway</strain>
    </source>
</reference>
<gene>
    <name type="primary">Cmas</name>
</gene>